<proteinExistence type="inferred from homology"/>
<reference key="1">
    <citation type="journal article" date="2005" name="J. Bacteriol.">
        <title>Insights on evolution of virulence and resistance from the complete genome analysis of an early methicillin-resistant Staphylococcus aureus strain and a biofilm-producing methicillin-resistant Staphylococcus epidermidis strain.</title>
        <authorList>
            <person name="Gill S.R."/>
            <person name="Fouts D.E."/>
            <person name="Archer G.L."/>
            <person name="Mongodin E.F."/>
            <person name="DeBoy R.T."/>
            <person name="Ravel J."/>
            <person name="Paulsen I.T."/>
            <person name="Kolonay J.F."/>
            <person name="Brinkac L.M."/>
            <person name="Beanan M.J."/>
            <person name="Dodson R.J."/>
            <person name="Daugherty S.C."/>
            <person name="Madupu R."/>
            <person name="Angiuoli S.V."/>
            <person name="Durkin A.S."/>
            <person name="Haft D.H."/>
            <person name="Vamathevan J.J."/>
            <person name="Khouri H."/>
            <person name="Utterback T.R."/>
            <person name="Lee C."/>
            <person name="Dimitrov G."/>
            <person name="Jiang L."/>
            <person name="Qin H."/>
            <person name="Weidman J."/>
            <person name="Tran K."/>
            <person name="Kang K.H."/>
            <person name="Hance I.R."/>
            <person name="Nelson K.E."/>
            <person name="Fraser C.M."/>
        </authorList>
    </citation>
    <scope>NUCLEOTIDE SEQUENCE [LARGE SCALE GENOMIC DNA]</scope>
    <source>
        <strain>COL</strain>
    </source>
</reference>
<feature type="chain" id="PRO_0000160547" description="ATP-dependent protease ATPase subunit HslU">
    <location>
        <begin position="1"/>
        <end position="467"/>
    </location>
</feature>
<feature type="region of interest" description="Disordered" evidence="2">
    <location>
        <begin position="149"/>
        <end position="192"/>
    </location>
</feature>
<feature type="compositionally biased region" description="Basic and acidic residues" evidence="2">
    <location>
        <begin position="178"/>
        <end position="192"/>
    </location>
</feature>
<feature type="binding site" evidence="1">
    <location>
        <position position="22"/>
    </location>
    <ligand>
        <name>ATP</name>
        <dbReference type="ChEBI" id="CHEBI:30616"/>
    </ligand>
</feature>
<feature type="binding site" evidence="1">
    <location>
        <begin position="64"/>
        <end position="69"/>
    </location>
    <ligand>
        <name>ATP</name>
        <dbReference type="ChEBI" id="CHEBI:30616"/>
    </ligand>
</feature>
<feature type="binding site" evidence="1">
    <location>
        <position position="280"/>
    </location>
    <ligand>
        <name>ATP</name>
        <dbReference type="ChEBI" id="CHEBI:30616"/>
    </ligand>
</feature>
<feature type="binding site" evidence="1">
    <location>
        <position position="345"/>
    </location>
    <ligand>
        <name>ATP</name>
        <dbReference type="ChEBI" id="CHEBI:30616"/>
    </ligand>
</feature>
<feature type="binding site" evidence="1">
    <location>
        <position position="417"/>
    </location>
    <ligand>
        <name>ATP</name>
        <dbReference type="ChEBI" id="CHEBI:30616"/>
    </ligand>
</feature>
<protein>
    <recommendedName>
        <fullName evidence="1">ATP-dependent protease ATPase subunit HslU</fullName>
    </recommendedName>
    <alternativeName>
        <fullName evidence="1">Unfoldase HslU</fullName>
    </alternativeName>
</protein>
<evidence type="ECO:0000255" key="1">
    <source>
        <dbReference type="HAMAP-Rule" id="MF_00249"/>
    </source>
</evidence>
<evidence type="ECO:0000256" key="2">
    <source>
        <dbReference type="SAM" id="MobiDB-lite"/>
    </source>
</evidence>
<keyword id="KW-0067">ATP-binding</keyword>
<keyword id="KW-0143">Chaperone</keyword>
<keyword id="KW-0963">Cytoplasm</keyword>
<keyword id="KW-0547">Nucleotide-binding</keyword>
<organism>
    <name type="scientific">Staphylococcus aureus (strain COL)</name>
    <dbReference type="NCBI Taxonomy" id="93062"/>
    <lineage>
        <taxon>Bacteria</taxon>
        <taxon>Bacillati</taxon>
        <taxon>Bacillota</taxon>
        <taxon>Bacilli</taxon>
        <taxon>Bacillales</taxon>
        <taxon>Staphylococcaceae</taxon>
        <taxon>Staphylococcus</taxon>
    </lineage>
</organism>
<comment type="function">
    <text evidence="1">ATPase subunit of a proteasome-like degradation complex; this subunit has chaperone activity. The binding of ATP and its subsequent hydrolysis by HslU are essential for unfolding of protein substrates subsequently hydrolyzed by HslV. HslU recognizes the N-terminal part of its protein substrates and unfolds these before they are guided to HslV for hydrolysis.</text>
</comment>
<comment type="subunit">
    <text evidence="1">A double ring-shaped homohexamer of HslV is capped on each side by a ring-shaped HslU homohexamer. The assembly of the HslU/HslV complex is dependent on binding of ATP.</text>
</comment>
<comment type="subcellular location">
    <subcellularLocation>
        <location evidence="1">Cytoplasm</location>
    </subcellularLocation>
</comment>
<comment type="similarity">
    <text evidence="1">Belongs to the ClpX chaperone family. HslU subfamily.</text>
</comment>
<dbReference type="EMBL" id="CP000046">
    <property type="protein sequence ID" value="AAW38103.1"/>
    <property type="molecule type" value="Genomic_DNA"/>
</dbReference>
<dbReference type="RefSeq" id="WP_000379054.1">
    <property type="nucleotide sequence ID" value="NZ_JBGOFO010000002.1"/>
</dbReference>
<dbReference type="SMR" id="Q5HGH8"/>
<dbReference type="KEGG" id="sac:SACOL1271"/>
<dbReference type="HOGENOM" id="CLU_033123_0_0_9"/>
<dbReference type="Proteomes" id="UP000000530">
    <property type="component" value="Chromosome"/>
</dbReference>
<dbReference type="GO" id="GO:0009376">
    <property type="term" value="C:HslUV protease complex"/>
    <property type="evidence" value="ECO:0007669"/>
    <property type="project" value="UniProtKB-UniRule"/>
</dbReference>
<dbReference type="GO" id="GO:0005524">
    <property type="term" value="F:ATP binding"/>
    <property type="evidence" value="ECO:0007669"/>
    <property type="project" value="UniProtKB-UniRule"/>
</dbReference>
<dbReference type="GO" id="GO:0016887">
    <property type="term" value="F:ATP hydrolysis activity"/>
    <property type="evidence" value="ECO:0007669"/>
    <property type="project" value="InterPro"/>
</dbReference>
<dbReference type="GO" id="GO:0008233">
    <property type="term" value="F:peptidase activity"/>
    <property type="evidence" value="ECO:0007669"/>
    <property type="project" value="InterPro"/>
</dbReference>
<dbReference type="GO" id="GO:0036402">
    <property type="term" value="F:proteasome-activating activity"/>
    <property type="evidence" value="ECO:0007669"/>
    <property type="project" value="UniProtKB-UniRule"/>
</dbReference>
<dbReference type="GO" id="GO:0043335">
    <property type="term" value="P:protein unfolding"/>
    <property type="evidence" value="ECO:0007669"/>
    <property type="project" value="UniProtKB-UniRule"/>
</dbReference>
<dbReference type="GO" id="GO:0051603">
    <property type="term" value="P:proteolysis involved in protein catabolic process"/>
    <property type="evidence" value="ECO:0007669"/>
    <property type="project" value="TreeGrafter"/>
</dbReference>
<dbReference type="CDD" id="cd19498">
    <property type="entry name" value="RecA-like_HslU"/>
    <property type="match status" value="1"/>
</dbReference>
<dbReference type="FunFam" id="3.40.50.300:FF:000220">
    <property type="entry name" value="ATP-dependent protease ATPase subunit HslU"/>
    <property type="match status" value="1"/>
</dbReference>
<dbReference type="Gene3D" id="1.10.8.60">
    <property type="match status" value="1"/>
</dbReference>
<dbReference type="Gene3D" id="1.10.8.10">
    <property type="entry name" value="DNA helicase RuvA subunit, C-terminal domain"/>
    <property type="match status" value="1"/>
</dbReference>
<dbReference type="Gene3D" id="3.40.50.300">
    <property type="entry name" value="P-loop containing nucleotide triphosphate hydrolases"/>
    <property type="match status" value="2"/>
</dbReference>
<dbReference type="HAMAP" id="MF_00249">
    <property type="entry name" value="HslU"/>
    <property type="match status" value="1"/>
</dbReference>
<dbReference type="InterPro" id="IPR003593">
    <property type="entry name" value="AAA+_ATPase"/>
</dbReference>
<dbReference type="InterPro" id="IPR050052">
    <property type="entry name" value="ATP-dep_Clp_protease_ClpX"/>
</dbReference>
<dbReference type="InterPro" id="IPR003959">
    <property type="entry name" value="ATPase_AAA_core"/>
</dbReference>
<dbReference type="InterPro" id="IPR019489">
    <property type="entry name" value="Clp_ATPase_C"/>
</dbReference>
<dbReference type="InterPro" id="IPR004491">
    <property type="entry name" value="HslU"/>
</dbReference>
<dbReference type="InterPro" id="IPR027417">
    <property type="entry name" value="P-loop_NTPase"/>
</dbReference>
<dbReference type="NCBIfam" id="TIGR00390">
    <property type="entry name" value="hslU"/>
    <property type="match status" value="1"/>
</dbReference>
<dbReference type="NCBIfam" id="NF003544">
    <property type="entry name" value="PRK05201.1"/>
    <property type="match status" value="1"/>
</dbReference>
<dbReference type="PANTHER" id="PTHR48102">
    <property type="entry name" value="ATP-DEPENDENT CLP PROTEASE ATP-BINDING SUBUNIT CLPX-LIKE, MITOCHONDRIAL-RELATED"/>
    <property type="match status" value="1"/>
</dbReference>
<dbReference type="PANTHER" id="PTHR48102:SF3">
    <property type="entry name" value="ATP-DEPENDENT PROTEASE ATPASE SUBUNIT HSLU"/>
    <property type="match status" value="1"/>
</dbReference>
<dbReference type="Pfam" id="PF00004">
    <property type="entry name" value="AAA"/>
    <property type="match status" value="1"/>
</dbReference>
<dbReference type="Pfam" id="PF07724">
    <property type="entry name" value="AAA_2"/>
    <property type="match status" value="1"/>
</dbReference>
<dbReference type="Pfam" id="PF10431">
    <property type="entry name" value="ClpB_D2-small"/>
    <property type="match status" value="1"/>
</dbReference>
<dbReference type="SMART" id="SM00382">
    <property type="entry name" value="AAA"/>
    <property type="match status" value="1"/>
</dbReference>
<dbReference type="SMART" id="SM01086">
    <property type="entry name" value="ClpB_D2-small"/>
    <property type="match status" value="1"/>
</dbReference>
<dbReference type="SUPFAM" id="SSF52540">
    <property type="entry name" value="P-loop containing nucleoside triphosphate hydrolases"/>
    <property type="match status" value="1"/>
</dbReference>
<name>HSLU_STAAC</name>
<sequence length="467" mass="52315">MDTAGIRLTPKEIVSKLNEYIVGQNDAKRKVAIALRNRYRRSLLDEESKQEISPKNILMIGPTGVGKTEIARRMAKVVGAPFIKVEATKFTEVGYVGRDVESMVRDLVDVSVRLVKAQKKSLVQDEATAKANEKLVKLLVPSMKKKASQTNNPLESLFGGAIPNFGQNNEDEEEPPTEEIKTKRSEIKRQLEEGKLEKEKVRIKVEQDPGALGMLGTNQNQQMQEMMNQLMPKKKVEREVAVETARKILADSYADELIDQESANQEALELAEQMGIIFIDEIDKVATNNHNSGQDVSRQGVQRDILPILEGSVIQTKYGTVNTEHMLFIGAGAFHVSKPSDLIPELQGRFPIRVELDSLSVEDFVRILTEPKLSLIKQYEALLQTEEVTVNFTDEAITRLAEIAYQVNQDTDNIGARRLHTILEKMLEDLSFEAPSMPNAVVDITPQYVDDKLKSISTNKDLSAFIL</sequence>
<accession>Q5HGH8</accession>
<gene>
    <name evidence="1" type="primary">hslU</name>
    <name type="ordered locus">SACOL1271</name>
</gene>